<organism>
    <name type="scientific">Saccharomyces cerevisiae (strain ATCC 204508 / S288c)</name>
    <name type="common">Baker's yeast</name>
    <dbReference type="NCBI Taxonomy" id="559292"/>
    <lineage>
        <taxon>Eukaryota</taxon>
        <taxon>Fungi</taxon>
        <taxon>Dikarya</taxon>
        <taxon>Ascomycota</taxon>
        <taxon>Saccharomycotina</taxon>
        <taxon>Saccharomycetes</taxon>
        <taxon>Saccharomycetales</taxon>
        <taxon>Saccharomycetaceae</taxon>
        <taxon>Saccharomyces</taxon>
    </lineage>
</organism>
<accession>Q00723</accession>
<accession>D6VUK7</accession>
<evidence type="ECO:0000256" key="1">
    <source>
        <dbReference type="SAM" id="MobiDB-lite"/>
    </source>
</evidence>
<evidence type="ECO:0000269" key="2">
    <source>
    </source>
</evidence>
<evidence type="ECO:0000269" key="3">
    <source>
    </source>
</evidence>
<evidence type="ECO:0000269" key="4">
    <source>
    </source>
</evidence>
<evidence type="ECO:0000269" key="5">
    <source>
    </source>
</evidence>
<evidence type="ECO:0000269" key="6">
    <source>
    </source>
</evidence>
<evidence type="ECO:0000269" key="7">
    <source>
    </source>
</evidence>
<evidence type="ECO:0000305" key="8"/>
<comment type="function">
    <text evidence="6 7">Required for pre-mRNA splicing and maintenance of stable U6 small nuclear RNA levels. Implicated in the formation of stable and biologically active snRNP structures. As part of the U4/U6.U5 tri-snRNP particle, dispensible for spliceosome assembly, but required for conformational changes, which result in U4 snRNA release and the subsequent catalytic activation of the spliceosome.</text>
</comment>
<comment type="subunit">
    <text evidence="2 3">Component of the U4/U6-U5 tri-snRNP complex composed of the U4, U6 and U5 snRNAs and at least PRP3, PRP4, PRP6, PRP8, PRP18, PRP31, PRP38, SNU13, SNU23, SNU66, SNU114, SPP381, SMB1, SMD1, SMD2, SMD3, SMX2, SMX3, LSM2, LSM3, LSM4, LSM5, LSM6, LSM7, LSM8, BRR2 and DIB1.</text>
</comment>
<comment type="interaction">
    <interactant intactId="EBI-841">
        <id>Q00723</id>
    </interactant>
    <interactant intactId="EBI-443">
        <id>P38282</id>
        <label>SPP381</label>
    </interactant>
    <organismsDiffer>false</organismsDiffer>
    <experiments>3</experiments>
</comment>
<comment type="subcellular location">
    <subcellularLocation>
        <location evidence="4">Nucleus</location>
    </subcellularLocation>
</comment>
<comment type="miscellaneous">
    <text evidence="5">Present with 2380 molecules/cell in log phase SD medium.</text>
</comment>
<comment type="similarity">
    <text evidence="8">Belongs to the PRP38 family.</text>
</comment>
<protein>
    <recommendedName>
        <fullName>Pre-mRNA-splicing factor 38</fullName>
    </recommendedName>
    <alternativeName>
        <fullName>Pre-mRNA-processing factor 38</fullName>
    </alternativeName>
</protein>
<reference key="1">
    <citation type="journal article" date="1992" name="Mol. Cell. Biol.">
        <title>PRP38 encodes a yeast protein required for pre-mRNA splicing and maintenance of stable U6 small nuclear RNA levels.</title>
        <authorList>
            <person name="Blanton S."/>
            <person name="Srinivasan A."/>
            <person name="Rymond B.C."/>
        </authorList>
    </citation>
    <scope>NUCLEOTIDE SEQUENCE [GENOMIC DNA]</scope>
    <scope>FUNCTION</scope>
</reference>
<reference key="2">
    <citation type="journal article" date="1997" name="Nature">
        <title>The nucleotide sequence of Saccharomyces cerevisiae chromosome VII.</title>
        <authorList>
            <person name="Tettelin H."/>
            <person name="Agostoni-Carbone M.L."/>
            <person name="Albermann K."/>
            <person name="Albers M."/>
            <person name="Arroyo J."/>
            <person name="Backes U."/>
            <person name="Barreiros T."/>
            <person name="Bertani I."/>
            <person name="Bjourson A.J."/>
            <person name="Brueckner M."/>
            <person name="Bruschi C.V."/>
            <person name="Carignani G."/>
            <person name="Castagnoli L."/>
            <person name="Cerdan E."/>
            <person name="Clemente M.L."/>
            <person name="Coblenz A."/>
            <person name="Coglievina M."/>
            <person name="Coissac E."/>
            <person name="Defoor E."/>
            <person name="Del Bino S."/>
            <person name="Delius H."/>
            <person name="Delneri D."/>
            <person name="de Wergifosse P."/>
            <person name="Dujon B."/>
            <person name="Durand P."/>
            <person name="Entian K.-D."/>
            <person name="Eraso P."/>
            <person name="Escribano V."/>
            <person name="Fabiani L."/>
            <person name="Fartmann B."/>
            <person name="Feroli F."/>
            <person name="Feuermann M."/>
            <person name="Frontali L."/>
            <person name="Garcia-Gonzalez M."/>
            <person name="Garcia-Saez M.I."/>
            <person name="Goffeau A."/>
            <person name="Guerreiro P."/>
            <person name="Hani J."/>
            <person name="Hansen M."/>
            <person name="Hebling U."/>
            <person name="Hernandez K."/>
            <person name="Heumann K."/>
            <person name="Hilger F."/>
            <person name="Hofmann B."/>
            <person name="Indge K.J."/>
            <person name="James C.M."/>
            <person name="Klima R."/>
            <person name="Koetter P."/>
            <person name="Kramer B."/>
            <person name="Kramer W."/>
            <person name="Lauquin G."/>
            <person name="Leuther H."/>
            <person name="Louis E.J."/>
            <person name="Maillier E."/>
            <person name="Marconi A."/>
            <person name="Martegani E."/>
            <person name="Mazon M.J."/>
            <person name="Mazzoni C."/>
            <person name="McReynolds A.D.K."/>
            <person name="Melchioretto P."/>
            <person name="Mewes H.-W."/>
            <person name="Minenkova O."/>
            <person name="Mueller-Auer S."/>
            <person name="Nawrocki A."/>
            <person name="Netter P."/>
            <person name="Neu R."/>
            <person name="Nombela C."/>
            <person name="Oliver S.G."/>
            <person name="Panzeri L."/>
            <person name="Paoluzi S."/>
            <person name="Plevani P."/>
            <person name="Portetelle D."/>
            <person name="Portillo F."/>
            <person name="Potier S."/>
            <person name="Purnelle B."/>
            <person name="Rieger M."/>
            <person name="Riles L."/>
            <person name="Rinaldi T."/>
            <person name="Robben J."/>
            <person name="Rodrigues-Pousada C."/>
            <person name="Rodriguez-Belmonte E."/>
            <person name="Rodriguez-Torres A.M."/>
            <person name="Rose M."/>
            <person name="Ruzzi M."/>
            <person name="Saliola M."/>
            <person name="Sanchez-Perez M."/>
            <person name="Schaefer B."/>
            <person name="Schaefer M."/>
            <person name="Scharfe M."/>
            <person name="Schmidheini T."/>
            <person name="Schreer A."/>
            <person name="Skala J."/>
            <person name="Souciet J.-L."/>
            <person name="Steensma H.Y."/>
            <person name="Talla E."/>
            <person name="Thierry A."/>
            <person name="Vandenbol M."/>
            <person name="van der Aart Q.J.M."/>
            <person name="Van Dyck L."/>
            <person name="Vanoni M."/>
            <person name="Verhasselt P."/>
            <person name="Voet M."/>
            <person name="Volckaert G."/>
            <person name="Wambutt R."/>
            <person name="Watson M.D."/>
            <person name="Weber N."/>
            <person name="Wedler E."/>
            <person name="Wedler H."/>
            <person name="Wipfli P."/>
            <person name="Wolf K."/>
            <person name="Wright L.F."/>
            <person name="Zaccaria P."/>
            <person name="Zimmermann M."/>
            <person name="Zollner A."/>
            <person name="Kleine K."/>
        </authorList>
    </citation>
    <scope>NUCLEOTIDE SEQUENCE [LARGE SCALE GENOMIC DNA]</scope>
    <source>
        <strain>ATCC 204508 / S288c</strain>
    </source>
</reference>
<reference key="3">
    <citation type="journal article" date="2014" name="G3 (Bethesda)">
        <title>The reference genome sequence of Saccharomyces cerevisiae: Then and now.</title>
        <authorList>
            <person name="Engel S.R."/>
            <person name="Dietrich F.S."/>
            <person name="Fisk D.G."/>
            <person name="Binkley G."/>
            <person name="Balakrishnan R."/>
            <person name="Costanzo M.C."/>
            <person name="Dwight S.S."/>
            <person name="Hitz B.C."/>
            <person name="Karra K."/>
            <person name="Nash R.S."/>
            <person name="Weng S."/>
            <person name="Wong E.D."/>
            <person name="Lloyd P."/>
            <person name="Skrzypek M.S."/>
            <person name="Miyasato S.R."/>
            <person name="Simison M."/>
            <person name="Cherry J.M."/>
        </authorList>
    </citation>
    <scope>GENOME REANNOTATION</scope>
    <source>
        <strain>ATCC 204508 / S288c</strain>
    </source>
</reference>
<reference key="4">
    <citation type="journal article" date="2007" name="Genome Res.">
        <title>Approaching a complete repository of sequence-verified protein-encoding clones for Saccharomyces cerevisiae.</title>
        <authorList>
            <person name="Hu Y."/>
            <person name="Rolfs A."/>
            <person name="Bhullar B."/>
            <person name="Murthy T.V.S."/>
            <person name="Zhu C."/>
            <person name="Berger M.F."/>
            <person name="Camargo A.A."/>
            <person name="Kelley F."/>
            <person name="McCarron S."/>
            <person name="Jepson D."/>
            <person name="Richardson A."/>
            <person name="Raphael J."/>
            <person name="Moreira D."/>
            <person name="Taycher E."/>
            <person name="Zuo D."/>
            <person name="Mohr S."/>
            <person name="Kane M.F."/>
            <person name="Williamson J."/>
            <person name="Simpson A.J.G."/>
            <person name="Bulyk M.L."/>
            <person name="Harlow E."/>
            <person name="Marsischky G."/>
            <person name="Kolodner R.D."/>
            <person name="LaBaer J."/>
        </authorList>
    </citation>
    <scope>NUCLEOTIDE SEQUENCE [GENOMIC DNA]</scope>
    <source>
        <strain>ATCC 204508 / S288c</strain>
    </source>
</reference>
<reference key="5">
    <citation type="journal article" date="1998" name="EMBO J.">
        <title>Progression through the spliceosome cycle requires Prp38p function for U4/U6 snRNA dissociation.</title>
        <authorList>
            <person name="Xie J."/>
            <person name="Beickman K."/>
            <person name="Otte E."/>
            <person name="Rymond B.C."/>
        </authorList>
    </citation>
    <scope>FUNCTION</scope>
    <scope>INTERACTION WITH U4/U6.U5 TRI-SNRNP COMPLEX</scope>
    <scope>MUTAGENESIS OF CYS-87</scope>
</reference>
<reference key="6">
    <citation type="journal article" date="1999" name="EMBO J.">
        <title>Identification by mass spectrometry and functional analysis of novel proteins of the yeast [U4/U6.U5] tri-snRNP.</title>
        <authorList>
            <person name="Gottschalk A."/>
            <person name="Neubauer G."/>
            <person name="Banroques J."/>
            <person name="Mann M."/>
            <person name="Luehrmann R."/>
            <person name="Fabrizio P."/>
        </authorList>
    </citation>
    <scope>SUBUNIT</scope>
    <scope>IDENTIFICATION IN THE U4/U5/U6 TRI-SNRNP COMPLEX</scope>
    <scope>IDENTIFICATION BY MASS SPECTROMETRY</scope>
</reference>
<reference key="7">
    <citation type="journal article" date="1999" name="Proc. Natl. Acad. Sci. U.S.A.">
        <title>Purification of the yeast U4/U6.U5 small nuclear ribonucleoprotein particle and identification of its proteins.</title>
        <authorList>
            <person name="Stevens S.W."/>
            <person name="Abelson J."/>
        </authorList>
    </citation>
    <scope>IDENTIFICATION IN U4/U6.U5 TRI-SNRNP COMPLEX BY MASS SPECTROMETRY</scope>
</reference>
<reference key="8">
    <citation type="journal article" date="2002" name="Mol. Cell">
        <title>Composition and functional characterization of the yeast spliceosomal penta-snRNP.</title>
        <authorList>
            <person name="Stevens S.W."/>
            <person name="Ryan D.E."/>
            <person name="Ge H.Y."/>
            <person name="Moore R.E."/>
            <person name="Young M.K."/>
            <person name="Lee T.D."/>
            <person name="Abelson J."/>
        </authorList>
    </citation>
    <scope>IDENTIFICATION BY MASS SPECTROMETRY</scope>
</reference>
<reference key="9">
    <citation type="journal article" date="2003" name="Nature">
        <title>Global analysis of protein localization in budding yeast.</title>
        <authorList>
            <person name="Huh W.-K."/>
            <person name="Falvo J.V."/>
            <person name="Gerke L.C."/>
            <person name="Carroll A.S."/>
            <person name="Howson R.W."/>
            <person name="Weissman J.S."/>
            <person name="O'Shea E.K."/>
        </authorList>
    </citation>
    <scope>SUBCELLULAR LOCATION [LARGE SCALE ANALYSIS]</scope>
</reference>
<reference key="10">
    <citation type="journal article" date="2003" name="Nature">
        <title>Global analysis of protein expression in yeast.</title>
        <authorList>
            <person name="Ghaemmaghami S."/>
            <person name="Huh W.-K."/>
            <person name="Bower K."/>
            <person name="Howson R.W."/>
            <person name="Belle A."/>
            <person name="Dephoure N."/>
            <person name="O'Shea E.K."/>
            <person name="Weissman J.S."/>
        </authorList>
    </citation>
    <scope>LEVEL OF PROTEIN EXPRESSION [LARGE SCALE ANALYSIS]</scope>
</reference>
<sequence>MAVNEFQVESNISPKQLNNQSVSLVIPRLTRDKIHNSMYYKVNLSNESLRGNTMVELLKVMIGAFGTIKGQNGHLHMMVLGGIEFKCILMKLIEIRPNFQQLNFLLNVKNENGFDSKYIIALLLVYARLQYYYLNGNNKNDDDENDLIKLFKVQLYKYSQHYFKLKSFPLQVDCFAHSYNEELCIIHIDELVDWLATQDHIWGIPLGKCQWNKIYNSDEESSSSESESNGDSEDDNDTSSES</sequence>
<name>PRP38_YEAST</name>
<keyword id="KW-0002">3D-structure</keyword>
<keyword id="KW-0507">mRNA processing</keyword>
<keyword id="KW-0508">mRNA splicing</keyword>
<keyword id="KW-0539">Nucleus</keyword>
<keyword id="KW-1185">Reference proteome</keyword>
<keyword id="KW-0687">Ribonucleoprotein</keyword>
<keyword id="KW-0747">Spliceosome</keyword>
<proteinExistence type="evidence at protein level"/>
<feature type="chain" id="PRO_0000058590" description="Pre-mRNA-splicing factor 38">
    <location>
        <begin position="1"/>
        <end position="242"/>
    </location>
</feature>
<feature type="region of interest" description="Disordered" evidence="1">
    <location>
        <begin position="217"/>
        <end position="242"/>
    </location>
</feature>
<feature type="mutagenesis site" description="In PRP83-2; temperature-sensitive; blocks splicing of RPS17A after a 2 hour shift to the restrictive temperature of 37 degrees Celsius; spliceosome assembly arrested at the complex I stage." evidence="7">
    <original>C</original>
    <variation>Y</variation>
    <location>
        <position position="87"/>
    </location>
</feature>
<gene>
    <name type="primary">PRP38</name>
    <name type="ordered locus">YGR075C</name>
</gene>
<dbReference type="EMBL" id="L04669">
    <property type="protein sequence ID" value="AAA35054.1"/>
    <property type="molecule type" value="Genomic_DNA"/>
</dbReference>
<dbReference type="EMBL" id="M95921">
    <property type="protein sequence ID" value="AAA34913.1"/>
    <property type="molecule type" value="Genomic_DNA"/>
</dbReference>
<dbReference type="EMBL" id="Z72858">
    <property type="protein sequence ID" value="CAA97077.1"/>
    <property type="molecule type" value="Genomic_DNA"/>
</dbReference>
<dbReference type="EMBL" id="AY558507">
    <property type="protein sequence ID" value="AAS56833.1"/>
    <property type="molecule type" value="Genomic_DNA"/>
</dbReference>
<dbReference type="EMBL" id="BK006941">
    <property type="protein sequence ID" value="DAA08168.1"/>
    <property type="molecule type" value="Genomic_DNA"/>
</dbReference>
<dbReference type="PIR" id="S30888">
    <property type="entry name" value="S30888"/>
</dbReference>
<dbReference type="RefSeq" id="NP_011589.3">
    <property type="nucleotide sequence ID" value="NM_001181204.3"/>
</dbReference>
<dbReference type="PDB" id="5NRL">
    <property type="method" value="EM"/>
    <property type="resolution" value="7.20 A"/>
    <property type="chains" value="M=1-242"/>
</dbReference>
<dbReference type="PDB" id="5ZWO">
    <property type="method" value="EM"/>
    <property type="resolution" value="3.90 A"/>
    <property type="chains" value="0=1-242"/>
</dbReference>
<dbReference type="PDBsum" id="5NRL"/>
<dbReference type="PDBsum" id="5ZWO"/>
<dbReference type="EMDB" id="EMD-3683"/>
<dbReference type="EMDB" id="EMD-6974"/>
<dbReference type="SMR" id="Q00723"/>
<dbReference type="BioGRID" id="33317">
    <property type="interactions" value="137"/>
</dbReference>
<dbReference type="ComplexPortal" id="CPX-25">
    <property type="entry name" value="U4/U6.U5 tri-small nuclear ribonucleoprotein complex"/>
</dbReference>
<dbReference type="DIP" id="DIP-1648N"/>
<dbReference type="FunCoup" id="Q00723">
    <property type="interactions" value="181"/>
</dbReference>
<dbReference type="IntAct" id="Q00723">
    <property type="interactions" value="25"/>
</dbReference>
<dbReference type="MINT" id="Q00723"/>
<dbReference type="STRING" id="4932.YGR075C"/>
<dbReference type="PaxDb" id="4932-YGR075C"/>
<dbReference type="PeptideAtlas" id="Q00723"/>
<dbReference type="EnsemblFungi" id="YGR075C_mRNA">
    <property type="protein sequence ID" value="YGR075C"/>
    <property type="gene ID" value="YGR075C"/>
</dbReference>
<dbReference type="GeneID" id="852966"/>
<dbReference type="KEGG" id="sce:YGR075C"/>
<dbReference type="AGR" id="SGD:S000003307"/>
<dbReference type="SGD" id="S000003307">
    <property type="gene designation" value="PRP38"/>
</dbReference>
<dbReference type="VEuPathDB" id="FungiDB:YGR075C"/>
<dbReference type="eggNOG" id="ENOG502RXT7">
    <property type="taxonomic scope" value="Eukaryota"/>
</dbReference>
<dbReference type="HOGENOM" id="CLU_1147968_0_0_1"/>
<dbReference type="InParanoid" id="Q00723"/>
<dbReference type="OMA" id="FKCLLMK"/>
<dbReference type="OrthoDB" id="190958at2759"/>
<dbReference type="BioCyc" id="YEAST:G3O-30787-MONOMER"/>
<dbReference type="BioGRID-ORCS" id="852966">
    <property type="hits" value="2 hits in 10 CRISPR screens"/>
</dbReference>
<dbReference type="PRO" id="PR:Q00723"/>
<dbReference type="Proteomes" id="UP000002311">
    <property type="component" value="Chromosome VII"/>
</dbReference>
<dbReference type="RNAct" id="Q00723">
    <property type="molecule type" value="protein"/>
</dbReference>
<dbReference type="GO" id="GO:0005634">
    <property type="term" value="C:nucleus"/>
    <property type="evidence" value="ECO:0000303"/>
    <property type="project" value="ComplexPortal"/>
</dbReference>
<dbReference type="GO" id="GO:0071011">
    <property type="term" value="C:precatalytic spliceosome"/>
    <property type="evidence" value="ECO:0000318"/>
    <property type="project" value="GO_Central"/>
</dbReference>
<dbReference type="GO" id="GO:0005681">
    <property type="term" value="C:spliceosomal complex"/>
    <property type="evidence" value="ECO:0000303"/>
    <property type="project" value="ComplexPortal"/>
</dbReference>
<dbReference type="GO" id="GO:0046540">
    <property type="term" value="C:U4/U6 x U5 tri-snRNP complex"/>
    <property type="evidence" value="ECO:0000314"/>
    <property type="project" value="SGD"/>
</dbReference>
<dbReference type="GO" id="GO:0000398">
    <property type="term" value="P:mRNA splicing, via spliceosome"/>
    <property type="evidence" value="ECO:0000303"/>
    <property type="project" value="ComplexPortal"/>
</dbReference>
<dbReference type="GO" id="GO:0000388">
    <property type="term" value="P:spliceosome conformational change to release U4 (or U4atac) and U1 (or U11)"/>
    <property type="evidence" value="ECO:0000315"/>
    <property type="project" value="SGD"/>
</dbReference>
<dbReference type="InterPro" id="IPR005037">
    <property type="entry name" value="PRP38"/>
</dbReference>
<dbReference type="PANTHER" id="PTHR23142">
    <property type="entry name" value="PRE-MRNA-SPLICING FACTOR 38A-RELATED"/>
    <property type="match status" value="1"/>
</dbReference>
<dbReference type="Pfam" id="PF03371">
    <property type="entry name" value="PRP38"/>
    <property type="match status" value="1"/>
</dbReference>